<comment type="function">
    <text evidence="11">Exhibits cGTPase activity; binds and hydrolyzes specifically GTP (PubMed:18801746). May participate in ribosome assembly and stability and thus regulates protein synthesis in chloroplasts. The GTPase activity requires MgCl(2)and the presence of either KCl or (NH(4))(2)SO(4). Involved in the post-transcriptional regulation of the methylerythritol phosphate (MEP) pathway. Involved in chlorophyll-a fluorescence regulation.</text>
</comment>
<comment type="function">
    <text>May mediate the production or accumulation of nitric oxide (NO) which is a messenger molecule involved in hormonal signaling and defense responses in plant (PubMed:14526079, PubMed:16272429, PubMed:16690168, PubMed:17351048). Acts as an antisenescence agent. Plays a crucial role in both extracellular calmodulin (ExtCaM)-triggered and salicylic acid (SA)-mediated H(2)O(2)-dependent stomatal closure.</text>
</comment>
<comment type="catalytic activity">
    <reaction>
        <text>2 L-arginine + 3 NADPH + 4 O2 + H(+) = 2 L-citrulline + 2 nitric oxide + 3 NADP(+) + 4 H2O</text>
        <dbReference type="Rhea" id="RHEA:19897"/>
        <dbReference type="ChEBI" id="CHEBI:15377"/>
        <dbReference type="ChEBI" id="CHEBI:15378"/>
        <dbReference type="ChEBI" id="CHEBI:15379"/>
        <dbReference type="ChEBI" id="CHEBI:16480"/>
        <dbReference type="ChEBI" id="CHEBI:32682"/>
        <dbReference type="ChEBI" id="CHEBI:57743"/>
        <dbReference type="ChEBI" id="CHEBI:57783"/>
        <dbReference type="ChEBI" id="CHEBI:58349"/>
        <dbReference type="EC" id="1.14.13.39"/>
    </reaction>
</comment>
<comment type="activity regulation">
    <text>Stimulated by calcium/calmodulin. Inhibited by L-NAME. Not activated by tetrahydrobiopterin (BH4), FAD, FMN, or heme.</text>
</comment>
<comment type="biophysicochemical properties">
    <kinetics>
        <KM evidence="4">12.5 uM for arginine</KM>
        <KM evidence="11">64.5 uM for GTP (at 37 degrees Celsius)</KM>
        <Vmax evidence="4">5.0 nmol/min/mg enzyme with arginine as substrate</Vmax>
    </kinetics>
</comment>
<comment type="subcellular location">
    <subcellularLocation>
        <location evidence="6">Mitochondrion</location>
    </subcellularLocation>
    <subcellularLocation>
        <location evidence="10">Plastid</location>
        <location evidence="10">Chloroplast</location>
    </subcellularLocation>
    <text evidence="6 10">Was initially thought to be mitochondrial (PubMed:16272429). In fact seems to be chloroplastic (PubMed:18469163).</text>
</comment>
<comment type="alternative products">
    <event type="alternative splicing"/>
    <isoform>
        <id>Q66GP9-1</id>
        <name>1</name>
        <sequence type="displayed"/>
    </isoform>
    <isoform>
        <id>Q66GP9-2</id>
        <name>2</name>
        <sequence type="described" ref="VSP_044128"/>
    </isoform>
</comment>
<comment type="tissue specificity">
    <text evidence="8">Expressed in aleurone layer and the embryo.</text>
</comment>
<comment type="induction">
    <text evidence="5">Constitutively expressed. Induced by abscisic acid (ABA) and lipopolysaccharides.</text>
</comment>
<comment type="disruption phenotype">
    <text evidence="6 7 9 10 12 13 14">Pale seedlings with a delayed development and greening of true leaves resulting in small plants with a characteristic virescent phenotype of pale young leaves but green mature leaves. Loss of NOS activity in mitochondria. Reduced extracellular calmodulin- (ExtCaM-) triggered and salicylic acid (SA)-mediated increase in NO levels and subsequent H(2)O(2)-dependent stomatal closure. Faster dark-induced senescence in leaves. Higher accumulation of hydrogen peroxide, superoxide anion, oxidized lipid, and oxidized protein. Increased hypersensitivity to salt stress and methyl viologen (MV) treatment. Enhanced accumulation of Na(+) but reduced accumulation of K(+) when exposed to NaCl leading to an enhanced sensitivity to salt. Post-transcriptional up-regulation of the methylerythritol phosphate (MEP) pathway. Enhanced resistance to fosmidomycin (FSM). Disturbed chlorophyll-a fluorescence induction in response to temperature variation, accompanied with altered polyamines accumulation.</text>
</comment>
<comment type="similarity">
    <text evidence="3">Belongs to the TRAFAC class YlqF/YawG GTPase family. NOA1 subfamily.</text>
</comment>
<comment type="caution">
    <text evidence="16">Nitric oxide synthase (NOS) activity is dubious.</text>
</comment>
<comment type="sequence caution" evidence="15">
    <conflict type="erroneous gene model prediction">
        <sequence resource="EMBL-CDS" id="CAB51217"/>
    </conflict>
</comment>
<keyword id="KW-0025">Alternative splicing</keyword>
<keyword id="KW-0150">Chloroplast</keyword>
<keyword id="KW-0342">GTP-binding</keyword>
<keyword id="KW-0378">Hydrolase</keyword>
<keyword id="KW-0496">Mitochondrion</keyword>
<keyword id="KW-0521">NADP</keyword>
<keyword id="KW-0547">Nucleotide-binding</keyword>
<keyword id="KW-0560">Oxidoreductase</keyword>
<keyword id="KW-0934">Plastid</keyword>
<keyword id="KW-1185">Reference proteome</keyword>
<keyword id="KW-0809">Transit peptide</keyword>
<proteinExistence type="evidence at protein level"/>
<feature type="transit peptide" description="Chloroplast and mitochondrion" evidence="2">
    <location>
        <begin position="1"/>
        <end position="31"/>
    </location>
</feature>
<feature type="chain" id="PRO_0000213736" description="NO-associated protein 1, chloroplastic/mitochondrial">
    <location>
        <begin position="32"/>
        <end position="561"/>
    </location>
</feature>
<feature type="domain" description="CP-type G" evidence="3">
    <location>
        <begin position="175"/>
        <end position="351"/>
    </location>
</feature>
<feature type="binding site" evidence="1">
    <location>
        <begin position="108"/>
        <end position="111"/>
    </location>
    <ligand>
        <name>GTP</name>
        <dbReference type="ChEBI" id="CHEBI:37565"/>
    </ligand>
</feature>
<feature type="binding site" evidence="1">
    <location>
        <begin position="166"/>
        <end position="174"/>
    </location>
    <ligand>
        <name>GTP</name>
        <dbReference type="ChEBI" id="CHEBI:37565"/>
    </ligand>
</feature>
<feature type="binding site" evidence="1">
    <location>
        <begin position="223"/>
        <end position="226"/>
    </location>
    <ligand>
        <name>GTP</name>
        <dbReference type="ChEBI" id="CHEBI:37565"/>
    </ligand>
</feature>
<feature type="binding site" evidence="1">
    <location>
        <begin position="260"/>
        <end position="261"/>
    </location>
    <ligand>
        <name>GTP</name>
        <dbReference type="ChEBI" id="CHEBI:37565"/>
    </ligand>
</feature>
<feature type="binding site" evidence="1">
    <location>
        <begin position="289"/>
        <end position="294"/>
    </location>
    <ligand>
        <name>GTP</name>
        <dbReference type="ChEBI" id="CHEBI:37565"/>
    </ligand>
</feature>
<feature type="splice variant" id="VSP_044128" description="In isoform 2." evidence="15">
    <original>KE</original>
    <variation>AK</variation>
    <location>
        <begin position="443"/>
        <end position="444"/>
    </location>
</feature>
<feature type="mutagenesis site" description="Loss of GTPase activity." evidence="11">
    <original>T</original>
    <variation>A</variation>
    <location>
        <position position="327"/>
    </location>
</feature>
<reference key="1">
    <citation type="journal article" date="2000" name="Nature">
        <title>Sequence and analysis of chromosome 3 of the plant Arabidopsis thaliana.</title>
        <authorList>
            <person name="Salanoubat M."/>
            <person name="Lemcke K."/>
            <person name="Rieger M."/>
            <person name="Ansorge W."/>
            <person name="Unseld M."/>
            <person name="Fartmann B."/>
            <person name="Valle G."/>
            <person name="Bloecker H."/>
            <person name="Perez-Alonso M."/>
            <person name="Obermaier B."/>
            <person name="Delseny M."/>
            <person name="Boutry M."/>
            <person name="Grivell L.A."/>
            <person name="Mache R."/>
            <person name="Puigdomenech P."/>
            <person name="De Simone V."/>
            <person name="Choisne N."/>
            <person name="Artiguenave F."/>
            <person name="Robert C."/>
            <person name="Brottier P."/>
            <person name="Wincker P."/>
            <person name="Cattolico L."/>
            <person name="Weissenbach J."/>
            <person name="Saurin W."/>
            <person name="Quetier F."/>
            <person name="Schaefer M."/>
            <person name="Mueller-Auer S."/>
            <person name="Gabel C."/>
            <person name="Fuchs M."/>
            <person name="Benes V."/>
            <person name="Wurmbach E."/>
            <person name="Drzonek H."/>
            <person name="Erfle H."/>
            <person name="Jordan N."/>
            <person name="Bangert S."/>
            <person name="Wiedelmann R."/>
            <person name="Kranz H."/>
            <person name="Voss H."/>
            <person name="Holland R."/>
            <person name="Brandt P."/>
            <person name="Nyakatura G."/>
            <person name="Vezzi A."/>
            <person name="D'Angelo M."/>
            <person name="Pallavicini A."/>
            <person name="Toppo S."/>
            <person name="Simionati B."/>
            <person name="Conrad A."/>
            <person name="Hornischer K."/>
            <person name="Kauer G."/>
            <person name="Loehnert T.-H."/>
            <person name="Nordsiek G."/>
            <person name="Reichelt J."/>
            <person name="Scharfe M."/>
            <person name="Schoen O."/>
            <person name="Bargues M."/>
            <person name="Terol J."/>
            <person name="Climent J."/>
            <person name="Navarro P."/>
            <person name="Collado C."/>
            <person name="Perez-Perez A."/>
            <person name="Ottenwaelder B."/>
            <person name="Duchemin D."/>
            <person name="Cooke R."/>
            <person name="Laudie M."/>
            <person name="Berger-Llauro C."/>
            <person name="Purnelle B."/>
            <person name="Masuy D."/>
            <person name="de Haan M."/>
            <person name="Maarse A.C."/>
            <person name="Alcaraz J.-P."/>
            <person name="Cottet A."/>
            <person name="Casacuberta E."/>
            <person name="Monfort A."/>
            <person name="Argiriou A."/>
            <person name="Flores M."/>
            <person name="Liguori R."/>
            <person name="Vitale D."/>
            <person name="Mannhaupt G."/>
            <person name="Haase D."/>
            <person name="Schoof H."/>
            <person name="Rudd S."/>
            <person name="Zaccaria P."/>
            <person name="Mewes H.-W."/>
            <person name="Mayer K.F.X."/>
            <person name="Kaul S."/>
            <person name="Town C.D."/>
            <person name="Koo H.L."/>
            <person name="Tallon L.J."/>
            <person name="Jenkins J."/>
            <person name="Rooney T."/>
            <person name="Rizzo M."/>
            <person name="Walts A."/>
            <person name="Utterback T."/>
            <person name="Fujii C.Y."/>
            <person name="Shea T.P."/>
            <person name="Creasy T.H."/>
            <person name="Haas B."/>
            <person name="Maiti R."/>
            <person name="Wu D."/>
            <person name="Peterson J."/>
            <person name="Van Aken S."/>
            <person name="Pai G."/>
            <person name="Militscher J."/>
            <person name="Sellers P."/>
            <person name="Gill J.E."/>
            <person name="Feldblyum T.V."/>
            <person name="Preuss D."/>
            <person name="Lin X."/>
            <person name="Nierman W.C."/>
            <person name="Salzberg S.L."/>
            <person name="White O."/>
            <person name="Venter J.C."/>
            <person name="Fraser C.M."/>
            <person name="Kaneko T."/>
            <person name="Nakamura Y."/>
            <person name="Sato S."/>
            <person name="Kato T."/>
            <person name="Asamizu E."/>
            <person name="Sasamoto S."/>
            <person name="Kimura T."/>
            <person name="Idesawa K."/>
            <person name="Kawashima K."/>
            <person name="Kishida Y."/>
            <person name="Kiyokawa C."/>
            <person name="Kohara M."/>
            <person name="Matsumoto M."/>
            <person name="Matsuno A."/>
            <person name="Muraki A."/>
            <person name="Nakayama S."/>
            <person name="Nakazaki N."/>
            <person name="Shinpo S."/>
            <person name="Takeuchi C."/>
            <person name="Wada T."/>
            <person name="Watanabe A."/>
            <person name="Yamada M."/>
            <person name="Yasuda M."/>
            <person name="Tabata S."/>
        </authorList>
    </citation>
    <scope>NUCLEOTIDE SEQUENCE [LARGE SCALE GENOMIC DNA]</scope>
    <source>
        <strain>cv. Columbia</strain>
    </source>
</reference>
<reference key="2">
    <citation type="journal article" date="2017" name="Plant J.">
        <title>Araport11: a complete reannotation of the Arabidopsis thaliana reference genome.</title>
        <authorList>
            <person name="Cheng C.Y."/>
            <person name="Krishnakumar V."/>
            <person name="Chan A.P."/>
            <person name="Thibaud-Nissen F."/>
            <person name="Schobel S."/>
            <person name="Town C.D."/>
        </authorList>
    </citation>
    <scope>GENOME REANNOTATION</scope>
    <source>
        <strain>cv. Columbia</strain>
    </source>
</reference>
<reference key="3">
    <citation type="submission" date="2004-10" db="EMBL/GenBank/DDBJ databases">
        <title>Arabidopsis ORF clones.</title>
        <authorList>
            <person name="Cheuk R.F."/>
            <person name="Chen H."/>
            <person name="Kim C.J."/>
            <person name="Shinn P."/>
            <person name="Ecker J.R."/>
        </authorList>
    </citation>
    <scope>NUCLEOTIDE SEQUENCE [LARGE SCALE MRNA] (ISOFORM 1)</scope>
    <source>
        <strain>cv. Columbia</strain>
    </source>
</reference>
<reference key="4">
    <citation type="submission" date="2006-07" db="EMBL/GenBank/DDBJ databases">
        <title>Large-scale analysis of RIKEN Arabidopsis full-length (RAFL) cDNAs.</title>
        <authorList>
            <person name="Totoki Y."/>
            <person name="Seki M."/>
            <person name="Ishida J."/>
            <person name="Nakajima M."/>
            <person name="Enju A."/>
            <person name="Kamiya A."/>
            <person name="Narusaka M."/>
            <person name="Shin-i T."/>
            <person name="Nakagawa M."/>
            <person name="Sakamoto N."/>
            <person name="Oishi K."/>
            <person name="Kohara Y."/>
            <person name="Kobayashi M."/>
            <person name="Toyoda A."/>
            <person name="Sakaki Y."/>
            <person name="Sakurai T."/>
            <person name="Iida K."/>
            <person name="Akiyama K."/>
            <person name="Satou M."/>
            <person name="Toyoda T."/>
            <person name="Konagaya A."/>
            <person name="Carninci P."/>
            <person name="Kawai J."/>
            <person name="Hayashizaki Y."/>
            <person name="Shinozaki K."/>
        </authorList>
    </citation>
    <scope>NUCLEOTIDE SEQUENCE [LARGE SCALE MRNA] (ISOFORM 1)</scope>
    <source>
        <strain>cv. Columbia</strain>
    </source>
</reference>
<reference key="5">
    <citation type="submission" date="2006-05" db="EMBL/GenBank/DDBJ databases">
        <title>Role of nitric oxide synthase in plant disease resistance.</title>
        <authorList>
            <person name="Cai X.-Z."/>
            <person name="Zhang H.-Z."/>
        </authorList>
    </citation>
    <scope>NUCLEOTIDE SEQUENCE [MRNA] OF 109-244 (ISOFORM 1/2)</scope>
    <source>
        <strain>cv. Columbia</strain>
    </source>
</reference>
<reference key="6">
    <citation type="journal article" date="2003" name="Science">
        <title>Identification of a plant nitric oxide synthase gene involved in hormonal signaling.</title>
        <authorList>
            <person name="Guo F.-Q."/>
            <person name="Okamoto M."/>
            <person name="Crawford N.M."/>
        </authorList>
    </citation>
    <scope>IDENTIFICATION</scope>
    <scope>CHARACTERIZATION</scope>
    <scope>FUNCTION AS NOS</scope>
    <scope>BIOPHYSICOCHEMICAL PROPERTIES</scope>
</reference>
<reference key="7">
    <citation type="journal article" date="2004" name="Proc. Natl. Acad. Sci. U.S.A.">
        <title>Innate immunity in Arabidopsis thaliana: lipopolysaccharides activate nitric oxide synthase (NOS) and induce defense genes.</title>
        <authorList>
            <person name="Zeidler D."/>
            <person name="Zaehringer U."/>
            <person name="Gerber I."/>
            <person name="Dubery I."/>
            <person name="Hartung T."/>
            <person name="Bors W."/>
            <person name="Hutzler P."/>
            <person name="Durner J."/>
        </authorList>
    </citation>
    <scope>INDUCTION BY LIPOPOLYSACCHARIDES</scope>
</reference>
<reference key="8">
    <citation type="journal article" date="2005" name="Plant Cell">
        <title>Arabidopsis nitric oxide synthase1 is targeted to mitochondria and protects against oxidative damage and dark-induced senescence.</title>
        <authorList>
            <person name="Guo F.-Q."/>
            <person name="Crawford N.M."/>
        </authorList>
    </citation>
    <scope>FUNCTION AS NOS</scope>
    <scope>SUBCELLULAR LOCATION</scope>
    <scope>DISRUPTION PHENOTYPE</scope>
</reference>
<reference key="9">
    <citation type="journal article" date="2007" name="J. Plant Physiol.">
        <title>Enhanced sensitivity to oxidative stress in an Arabidopsis nitric oxide synthase mutant.</title>
        <authorList>
            <person name="Zhao M."/>
            <person name="Zhao X."/>
            <person name="Wu Y."/>
            <person name="Zhang L."/>
        </authorList>
    </citation>
    <scope>FUNCTION AS NOS</scope>
    <scope>DISRUPTION PHENOTYPE</scope>
    <source>
        <strain>cv. Columbia</strain>
    </source>
</reference>
<reference key="10">
    <citation type="journal article" date="2007" name="Plant Physiol.">
        <title>The Arabidopsis aleurone layer responds to nitric oxide, gibberellin, and abscisic acid and is sufficient and necessary for seed dormancy.</title>
        <authorList>
            <person name="Bethke P.C."/>
            <person name="Libourel I.G.L."/>
            <person name="Aoyama N."/>
            <person name="Chung Y.-Y."/>
            <person name="Still D.W."/>
            <person name="Jones R.L."/>
        </authorList>
    </citation>
    <scope>TISSUE SPECIFICITY</scope>
</reference>
<reference key="11">
    <citation type="journal article" date="2007" name="Plant Physiol.">
        <title>Nitric oxide synthase-dependent nitric oxide production is associated with salt tolerance in Arabidopsis.</title>
        <authorList>
            <person name="Zhao M.-G."/>
            <person name="Tian Q.-Y."/>
            <person name="Zhang W.-H."/>
        </authorList>
    </citation>
    <scope>FUNCTION AS NOS</scope>
    <scope>DISRUPTION PHENOTYPE</scope>
</reference>
<reference key="12">
    <citation type="journal article" date="2008" name="J. Biol. Chem.">
        <title>AtNOS/AtNOA1 is a functional Arabidopsis thaliana cGTPase and not a nitric-oxide synthase.</title>
        <authorList>
            <person name="Moreau M."/>
            <person name="Lee G.I."/>
            <person name="Wang Y."/>
            <person name="Crane B.R."/>
            <person name="Klessig D.F."/>
        </authorList>
    </citation>
    <scope>FUNCTION AS GTPASE</scope>
    <scope>BIOPHYSICOCHEMICAL PROPERTIES</scope>
    <scope>MUTAGENESIS OF THR-327</scope>
</reference>
<reference key="13">
    <citation type="journal article" date="2008" name="Plant Cell">
        <title>A mutant impaired in the production of plastome-encoded proteins uncovers a mechanism for the homeostasis of isoprenoid biosynthetic enzymes in Arabidopsis plastids.</title>
        <authorList>
            <person name="Flores-Perez U."/>
            <person name="Sauret-Gueeto S."/>
            <person name="Gas E."/>
            <person name="Jarvis P."/>
            <person name="Rodriguez-Concepcion M."/>
        </authorList>
    </citation>
    <scope>FUNCTION AS GTPASE</scope>
    <scope>DISRUPTION PHENOTYPE</scope>
    <scope>SUBCELLULAR LOCATION</scope>
    <source>
        <strain>cv. Columbia</strain>
    </source>
</reference>
<reference key="14">
    <citation type="journal article" date="2009" name="Plant Physiol.">
        <title>A signaling pathway linking nitric oxide production to heterotrimeric G protein and hydrogen peroxide regulates extracellular calmodulin induction of stomatal closure in Arabidopsis.</title>
        <authorList>
            <person name="Li J.-H."/>
            <person name="Liu Y.-Q."/>
            <person name="Lue P."/>
            <person name="Lin H.-F."/>
            <person name="Bai Y."/>
            <person name="Wang X.-C."/>
            <person name="Chen Y.-L."/>
        </authorList>
    </citation>
    <scope>FUNCTION IN NO ACCUMULATION</scope>
    <scope>DISRUPTION PHENOTYPE</scope>
    <source>
        <strain>cv. Wassilewskija</strain>
    </source>
</reference>
<reference key="15">
    <citation type="journal article" date="2010" name="Plant Signal. Behav.">
        <title>AtNOA1 modulates nitric oxide accumulation and stomatal closure induced by salicylic acid in Arabidopsis.</title>
        <authorList>
            <person name="Sun L.R."/>
            <person name="Hao F.S."/>
            <person name="Lu B.S."/>
            <person name="Ma L.Y."/>
        </authorList>
    </citation>
    <scope>FUNCTION IN NO ACCUMULATION</scope>
    <scope>DISRUPTION PHENOTYPE</scope>
</reference>
<reference key="16">
    <citation type="journal article" date="2011" name="J. Plant Physiol.">
        <title>Atnoa1 mutant Arabidopsis plants induce compensation mechanisms to reduce the negative effects of the mutation.</title>
        <authorList>
            <person name="Majlath I."/>
            <person name="Szalai G."/>
            <person name="Papp I."/>
            <person name="Vankova R."/>
            <person name="Janda T."/>
        </authorList>
    </citation>
    <scope>FUNCTION</scope>
    <scope>DISRUPTION PHENOTYPE</scope>
</reference>
<reference key="17">
    <citation type="journal article" date="2006" name="J. Exp. Bot.">
        <title>Mechanisms for nitric oxide synthesis in plants.</title>
        <authorList>
            <person name="Crawford N.M."/>
        </authorList>
    </citation>
    <scope>REVIEW ON NOS</scope>
</reference>
<reference key="18">
    <citation type="journal article" date="2009" name="Plant Cell">
        <title>Hunting for plant nitric oxide synthase provides new evidence of a central role for plastids in nitric oxide metabolism.</title>
        <authorList>
            <person name="Gas E."/>
            <person name="Flores-Perez U."/>
            <person name="Sauret-Gueeto S."/>
            <person name="Rodriguez-Concepcion M."/>
        </authorList>
    </citation>
    <scope>REVIEW ON CONTROVERSY</scope>
</reference>
<accession>Q66GP9</accession>
<accession>F4JBJ3</accession>
<accession>Q0WWY8</accession>
<accession>Q157M8</accession>
<accession>Q9STX8</accession>
<organism>
    <name type="scientific">Arabidopsis thaliana</name>
    <name type="common">Mouse-ear cress</name>
    <dbReference type="NCBI Taxonomy" id="3702"/>
    <lineage>
        <taxon>Eukaryota</taxon>
        <taxon>Viridiplantae</taxon>
        <taxon>Streptophyta</taxon>
        <taxon>Embryophyta</taxon>
        <taxon>Tracheophyta</taxon>
        <taxon>Spermatophyta</taxon>
        <taxon>Magnoliopsida</taxon>
        <taxon>eudicotyledons</taxon>
        <taxon>Gunneridae</taxon>
        <taxon>Pentapetalae</taxon>
        <taxon>rosids</taxon>
        <taxon>malvids</taxon>
        <taxon>Brassicales</taxon>
        <taxon>Brassicaceae</taxon>
        <taxon>Camelineae</taxon>
        <taxon>Arabidopsis</taxon>
    </lineage>
</organism>
<protein>
    <recommendedName>
        <fullName>NO-associated protein 1, chloroplastic/mitochondrial</fullName>
        <shortName>AtNOA1</shortName>
    </recommendedName>
    <alternativeName>
        <fullName>Dubious mitochondrial nitric oxide synthase 1</fullName>
        <shortName>AtNOS1</shortName>
        <ecNumber>1.14.13.39</ecNumber>
    </alternativeName>
    <alternativeName>
        <fullName>GTPase NOA1</fullName>
    </alternativeName>
    <alternativeName>
        <fullName>Protein RESISTANT TO INHIBITION BY FOSMIDOMYCIN 1</fullName>
    </alternativeName>
</protein>
<evidence type="ECO:0000250" key="1"/>
<evidence type="ECO:0000255" key="2"/>
<evidence type="ECO:0000255" key="3">
    <source>
        <dbReference type="PROSITE-ProRule" id="PRU01058"/>
    </source>
</evidence>
<evidence type="ECO:0000269" key="4">
    <source>
    </source>
</evidence>
<evidence type="ECO:0000269" key="5">
    <source>
    </source>
</evidence>
<evidence type="ECO:0000269" key="6">
    <source>
    </source>
</evidence>
<evidence type="ECO:0000269" key="7">
    <source>
    </source>
</evidence>
<evidence type="ECO:0000269" key="8">
    <source>
    </source>
</evidence>
<evidence type="ECO:0000269" key="9">
    <source>
    </source>
</evidence>
<evidence type="ECO:0000269" key="10">
    <source>
    </source>
</evidence>
<evidence type="ECO:0000269" key="11">
    <source>
    </source>
</evidence>
<evidence type="ECO:0000269" key="12">
    <source>
    </source>
</evidence>
<evidence type="ECO:0000269" key="13">
    <source>
    </source>
</evidence>
<evidence type="ECO:0000269" key="14">
    <source>
    </source>
</evidence>
<evidence type="ECO:0000305" key="15"/>
<evidence type="ECO:0000305" key="16">
    <source>
    </source>
</evidence>
<name>NOA1_ARATH</name>
<sequence>MALRTLSTFPSLPRRHTTTRREPNLTVIYRNPTTSIVCKSIANSEPPVSLSERDGFAAAAPTPGERFLENQRAHEAQKVVKKEIKKEKKKKKEEIIARKVVDTSVSCCYGCGAPLQTSDVDSPGFVDLVTYELKKKHHQLRTMICGRCQLLSHGHMITAVGGNGGYPGGKQFVSADELREKLSHLRHEKALIVKLVDIVDFNGSFLARVRDLVGANPIILVITKIDLLPKGTDMNCIGDWVVEVTMRKKLNVLSVHLTSSKSLDGVSGVASEIQKEKKGRDVYILGAANVGKSAFINALLKTMAERDPVAAAAQKYKPIQSAVPGTTLGPIQINAFVGGEKLYDTPGVHLHHRQAAVVHSDDLPALAPQNRLRGQSFDISTLPTQSSSSPKGESLNGYTFFWGGLVRIDILKALPETCFTFYGPKALEIHAVPTKTATAFYEKELGVLLTPPSGKNQMQEWKGLQSHRLLQIEINDAKRPASDVAISGLGWISIEPIRKTRGTEPRDLNEAEHEIHICVSVPKPVEVFLRPTLPIGTSGTEWYQYRELTDKEEEVRPKWYF</sequence>
<gene>
    <name type="primary">NOA1</name>
    <name type="synonym">NOS1</name>
    <name type="synonym">RIF1</name>
    <name type="ordered locus">At3g47450</name>
    <name type="ORF">T21L8.200</name>
</gene>
<dbReference type="EC" id="1.14.13.39"/>
<dbReference type="EMBL" id="AL096860">
    <property type="protein sequence ID" value="CAB51217.1"/>
    <property type="status" value="ALT_SEQ"/>
    <property type="molecule type" value="Genomic_DNA"/>
</dbReference>
<dbReference type="EMBL" id="CP002686">
    <property type="protein sequence ID" value="AEE78282.1"/>
    <property type="molecule type" value="Genomic_DNA"/>
</dbReference>
<dbReference type="EMBL" id="CP002686">
    <property type="protein sequence ID" value="AEE78283.1"/>
    <property type="molecule type" value="Genomic_DNA"/>
</dbReference>
<dbReference type="EMBL" id="BT015353">
    <property type="protein sequence ID" value="AAU05476.1"/>
    <property type="molecule type" value="mRNA"/>
</dbReference>
<dbReference type="EMBL" id="BT015887">
    <property type="protein sequence ID" value="AAU95423.1"/>
    <property type="molecule type" value="mRNA"/>
</dbReference>
<dbReference type="EMBL" id="AK226195">
    <property type="protein sequence ID" value="BAE98360.1"/>
    <property type="molecule type" value="mRNA"/>
</dbReference>
<dbReference type="EMBL" id="DQ539437">
    <property type="protein sequence ID" value="ABG25038.1"/>
    <property type="molecule type" value="mRNA"/>
</dbReference>
<dbReference type="PIR" id="T13000">
    <property type="entry name" value="T13000"/>
</dbReference>
<dbReference type="RefSeq" id="NP_190329.2">
    <molecule id="Q66GP9-2"/>
    <property type="nucleotide sequence ID" value="NM_114613.3"/>
</dbReference>
<dbReference type="RefSeq" id="NP_850666.1">
    <molecule id="Q66GP9-1"/>
    <property type="nucleotide sequence ID" value="NM_180335.1"/>
</dbReference>
<dbReference type="SMR" id="Q66GP9"/>
<dbReference type="FunCoup" id="Q66GP9">
    <property type="interactions" value="2599"/>
</dbReference>
<dbReference type="STRING" id="3702.Q66GP9"/>
<dbReference type="GlyGen" id="Q66GP9">
    <property type="glycosylation" value="1 site"/>
</dbReference>
<dbReference type="SwissPalm" id="Q66GP9"/>
<dbReference type="PaxDb" id="3702-AT3G47450.1"/>
<dbReference type="ProteomicsDB" id="239053">
    <molecule id="Q66GP9-1"/>
</dbReference>
<dbReference type="EnsemblPlants" id="AT3G47450.1">
    <molecule id="Q66GP9-2"/>
    <property type="protein sequence ID" value="AT3G47450.1"/>
    <property type="gene ID" value="AT3G47450"/>
</dbReference>
<dbReference type="EnsemblPlants" id="AT3G47450.2">
    <molecule id="Q66GP9-1"/>
    <property type="protein sequence ID" value="AT3G47450.2"/>
    <property type="gene ID" value="AT3G47450"/>
</dbReference>
<dbReference type="GeneID" id="823899"/>
<dbReference type="Gramene" id="AT3G47450.1">
    <molecule id="Q66GP9-2"/>
    <property type="protein sequence ID" value="AT3G47450.1"/>
    <property type="gene ID" value="AT3G47450"/>
</dbReference>
<dbReference type="Gramene" id="AT3G47450.2">
    <molecule id="Q66GP9-1"/>
    <property type="protein sequence ID" value="AT3G47450.2"/>
    <property type="gene ID" value="AT3G47450"/>
</dbReference>
<dbReference type="KEGG" id="ath:AT3G47450"/>
<dbReference type="Araport" id="AT3G47450"/>
<dbReference type="TAIR" id="AT3G47450">
    <property type="gene designation" value="NOA1"/>
</dbReference>
<dbReference type="eggNOG" id="KOG1249">
    <property type="taxonomic scope" value="Eukaryota"/>
</dbReference>
<dbReference type="HOGENOM" id="CLU_017878_2_1_1"/>
<dbReference type="InParanoid" id="Q66GP9"/>
<dbReference type="OMA" id="HYNEVQD"/>
<dbReference type="PhylomeDB" id="Q66GP9"/>
<dbReference type="BioCyc" id="ARA:AT3G47450-MONOMER"/>
<dbReference type="PRO" id="PR:Q66GP9"/>
<dbReference type="Proteomes" id="UP000006548">
    <property type="component" value="Chromosome 3"/>
</dbReference>
<dbReference type="ExpressionAtlas" id="Q66GP9">
    <property type="expression patterns" value="baseline and differential"/>
</dbReference>
<dbReference type="GO" id="GO:0009507">
    <property type="term" value="C:chloroplast"/>
    <property type="evidence" value="ECO:0000314"/>
    <property type="project" value="TAIR"/>
</dbReference>
<dbReference type="GO" id="GO:0005739">
    <property type="term" value="C:mitochondrion"/>
    <property type="evidence" value="ECO:0000314"/>
    <property type="project" value="TAIR"/>
</dbReference>
<dbReference type="GO" id="GO:0005525">
    <property type="term" value="F:GTP binding"/>
    <property type="evidence" value="ECO:0007669"/>
    <property type="project" value="UniProtKB-KW"/>
</dbReference>
<dbReference type="GO" id="GO:0003924">
    <property type="term" value="F:GTPase activity"/>
    <property type="evidence" value="ECO:0000314"/>
    <property type="project" value="TAIR"/>
</dbReference>
<dbReference type="GO" id="GO:0016491">
    <property type="term" value="F:oxidoreductase activity"/>
    <property type="evidence" value="ECO:0007669"/>
    <property type="project" value="UniProtKB-KW"/>
</dbReference>
<dbReference type="GO" id="GO:0048366">
    <property type="term" value="P:leaf development"/>
    <property type="evidence" value="ECO:0000315"/>
    <property type="project" value="TAIR"/>
</dbReference>
<dbReference type="GO" id="GO:0006809">
    <property type="term" value="P:nitric oxide biosynthetic process"/>
    <property type="evidence" value="ECO:0000314"/>
    <property type="project" value="TAIR"/>
</dbReference>
<dbReference type="GO" id="GO:0009657">
    <property type="term" value="P:plastid organization"/>
    <property type="evidence" value="ECO:0000315"/>
    <property type="project" value="TAIR"/>
</dbReference>
<dbReference type="GO" id="GO:0010322">
    <property type="term" value="P:regulation of isopentenyl diphosphate biosynthetic process, methylerythritol 4-phosphate pathway"/>
    <property type="evidence" value="ECO:0000315"/>
    <property type="project" value="TAIR"/>
</dbReference>
<dbReference type="GO" id="GO:0051246">
    <property type="term" value="P:regulation of protein metabolic process"/>
    <property type="evidence" value="ECO:0000315"/>
    <property type="project" value="TAIR"/>
</dbReference>
<dbReference type="GO" id="GO:0006979">
    <property type="term" value="P:response to oxidative stress"/>
    <property type="evidence" value="ECO:0000314"/>
    <property type="project" value="TAIR"/>
</dbReference>
<dbReference type="GO" id="GO:0010193">
    <property type="term" value="P:response to ozone"/>
    <property type="evidence" value="ECO:0000315"/>
    <property type="project" value="TAIR"/>
</dbReference>
<dbReference type="GO" id="GO:0009651">
    <property type="term" value="P:response to salt stress"/>
    <property type="evidence" value="ECO:0000315"/>
    <property type="project" value="UniProtKB"/>
</dbReference>
<dbReference type="GO" id="GO:0010027">
    <property type="term" value="P:thylakoid membrane organization"/>
    <property type="evidence" value="ECO:0000315"/>
    <property type="project" value="TAIR"/>
</dbReference>
<dbReference type="CDD" id="cd01855">
    <property type="entry name" value="YqeH"/>
    <property type="match status" value="1"/>
</dbReference>
<dbReference type="Gene3D" id="3.40.50.300">
    <property type="entry name" value="P-loop containing nucleotide triphosphate hydrolases"/>
    <property type="match status" value="1"/>
</dbReference>
<dbReference type="InterPro" id="IPR030378">
    <property type="entry name" value="G_CP_dom"/>
</dbReference>
<dbReference type="InterPro" id="IPR006073">
    <property type="entry name" value="GTP-bd"/>
</dbReference>
<dbReference type="InterPro" id="IPR044229">
    <property type="entry name" value="NOA1"/>
</dbReference>
<dbReference type="InterPro" id="IPR048422">
    <property type="entry name" value="NOA1/YqeH-like_C"/>
</dbReference>
<dbReference type="InterPro" id="IPR027417">
    <property type="entry name" value="P-loop_NTPase"/>
</dbReference>
<dbReference type="PANTHER" id="PTHR47569">
    <property type="entry name" value="NO-ASSOCIATED PROTEIN 1, CHLOROPLASTIC/MITOCHONDRIAL"/>
    <property type="match status" value="1"/>
</dbReference>
<dbReference type="PANTHER" id="PTHR47569:SF2">
    <property type="entry name" value="NO-ASSOCIATED PROTEIN 1, CHLOROPLASTIC_MITOCHONDRIAL"/>
    <property type="match status" value="1"/>
</dbReference>
<dbReference type="Pfam" id="PF01926">
    <property type="entry name" value="MMR_HSR1"/>
    <property type="match status" value="1"/>
</dbReference>
<dbReference type="Pfam" id="PF21516">
    <property type="entry name" value="YqeH-like_C"/>
    <property type="match status" value="1"/>
</dbReference>
<dbReference type="SUPFAM" id="SSF52540">
    <property type="entry name" value="P-loop containing nucleoside triphosphate hydrolases"/>
    <property type="match status" value="1"/>
</dbReference>
<dbReference type="PROSITE" id="PS51721">
    <property type="entry name" value="G_CP"/>
    <property type="match status" value="1"/>
</dbReference>